<proteinExistence type="evidence at transcript level"/>
<evidence type="ECO:0000250" key="1">
    <source>
        <dbReference type="UniProtKB" id="P62737"/>
    </source>
</evidence>
<evidence type="ECO:0000250" key="2">
    <source>
        <dbReference type="UniProtKB" id="P68133"/>
    </source>
</evidence>
<evidence type="ECO:0000250" key="3">
    <source>
        <dbReference type="UniProtKB" id="P68134"/>
    </source>
</evidence>
<evidence type="ECO:0000250" key="4">
    <source>
        <dbReference type="UniProtKB" id="P68135"/>
    </source>
</evidence>
<evidence type="ECO:0000250" key="5">
    <source>
        <dbReference type="UniProtKB" id="P68137"/>
    </source>
</evidence>
<evidence type="ECO:0000305" key="6"/>
<sequence length="377" mass="41959">MCDDEETTALVCDNGSGLVKAGFAGDDAPRAVFPSIVGRPRHQGVMVGMGQKDSYVGDEAQSKRGILTLKYPIEHGIITNWDDMEKIWHHTFYNELRVAPEEHPTLLTEAPLNPKANREKMTQIMFETFNVPAMYVAIQAVLSLYASGRTTGIVLDAGDGVTHNVPVYEGYALPHAIMRLDLAGRDLTDYLMKILTERGYSFVTTAEREIVRDIKEKLCYVALDFENEMATAASSSSLEKSYELPDGQVITIGNERFRCPETLFQPSFIGMESAGIHETAYNSIMKCDIDIRKDLYANNVLSGGTTMYPGIADRMQKEITALAPSTMKIKIIAPPERKYSVWIGGSILASLSTFQQMWISKQEYDEAGPSIVHRKCF</sequence>
<reference key="1">
    <citation type="submission" date="1996-09" db="EMBL/GenBank/DDBJ databases">
        <title>Medaka actin genes.</title>
        <authorList>
            <person name="Kusakabe R."/>
            <person name="Kusakabe T."/>
            <person name="Suzuki N."/>
        </authorList>
    </citation>
    <scope>NUCLEOTIDE SEQUENCE [MRNA]</scope>
</reference>
<protein>
    <recommendedName>
        <fullName>Actin, alpha skeletal muscle</fullName>
        <ecNumber evidence="5">3.6.4.-</ecNumber>
    </recommendedName>
    <alternativeName>
        <fullName>Alpha-actin-1</fullName>
    </alternativeName>
    <alternativeName>
        <fullName>OlMA1</fullName>
    </alternativeName>
    <component>
        <recommendedName>
            <fullName>Actin, alpha skeletal muscle, intermediate form</fullName>
        </recommendedName>
    </component>
</protein>
<feature type="initiator methionine" description="Removed">
    <location>
        <position position="1"/>
    </location>
</feature>
<feature type="chain" id="PRO_0000442827" description="Actin, alpha skeletal muscle, intermediate form" evidence="1">
    <location>
        <begin position="2"/>
        <end position="377"/>
    </location>
</feature>
<feature type="chain" id="PRO_0000442828" description="Actin, alpha skeletal muscle" evidence="1">
    <location>
        <begin position="3"/>
        <end position="377"/>
    </location>
</feature>
<feature type="modified residue" description="N-acetylcysteine; in intermediate form" evidence="1">
    <location>
        <position position="2"/>
    </location>
</feature>
<feature type="modified residue" description="N-acetylaspartate; in Actin, alpha skeletal muscle" evidence="4">
    <location>
        <position position="3"/>
    </location>
</feature>
<feature type="modified residue" description="Methionine (R)-sulfoxide" evidence="3">
    <location>
        <position position="46"/>
    </location>
</feature>
<feature type="modified residue" description="Methionine (R)-sulfoxide" evidence="3">
    <location>
        <position position="49"/>
    </location>
</feature>
<feature type="modified residue" description="Tele-methylhistidine" evidence="4">
    <location>
        <position position="75"/>
    </location>
</feature>
<feature type="modified residue" description="N6-methyllysine" evidence="2">
    <location>
        <position position="86"/>
    </location>
</feature>
<keyword id="KW-0007">Acetylation</keyword>
<keyword id="KW-0067">ATP-binding</keyword>
<keyword id="KW-0963">Cytoplasm</keyword>
<keyword id="KW-0206">Cytoskeleton</keyword>
<keyword id="KW-0378">Hydrolase</keyword>
<keyword id="KW-0488">Methylation</keyword>
<keyword id="KW-0514">Muscle protein</keyword>
<keyword id="KW-0547">Nucleotide-binding</keyword>
<keyword id="KW-0558">Oxidation</keyword>
<keyword id="KW-1185">Reference proteome</keyword>
<accession>Q98972</accession>
<organism>
    <name type="scientific">Oryzias latipes</name>
    <name type="common">Japanese rice fish</name>
    <name type="synonym">Japanese killifish</name>
    <dbReference type="NCBI Taxonomy" id="8090"/>
    <lineage>
        <taxon>Eukaryota</taxon>
        <taxon>Metazoa</taxon>
        <taxon>Chordata</taxon>
        <taxon>Craniata</taxon>
        <taxon>Vertebrata</taxon>
        <taxon>Euteleostomi</taxon>
        <taxon>Actinopterygii</taxon>
        <taxon>Neopterygii</taxon>
        <taxon>Teleostei</taxon>
        <taxon>Neoteleostei</taxon>
        <taxon>Acanthomorphata</taxon>
        <taxon>Ovalentaria</taxon>
        <taxon>Atherinomorphae</taxon>
        <taxon>Beloniformes</taxon>
        <taxon>Adrianichthyidae</taxon>
        <taxon>Oryziinae</taxon>
        <taxon>Oryzias</taxon>
    </lineage>
</organism>
<name>ACTS_ORYLA</name>
<comment type="function">
    <text>Actins are highly conserved proteins that are involved in various types of cell motility and are ubiquitously expressed in all eukaryotic cells.</text>
</comment>
<comment type="catalytic activity">
    <reaction evidence="5">
        <text>ATP + H2O = ADP + phosphate + H(+)</text>
        <dbReference type="Rhea" id="RHEA:13065"/>
        <dbReference type="ChEBI" id="CHEBI:15377"/>
        <dbReference type="ChEBI" id="CHEBI:15378"/>
        <dbReference type="ChEBI" id="CHEBI:30616"/>
        <dbReference type="ChEBI" id="CHEBI:43474"/>
        <dbReference type="ChEBI" id="CHEBI:456216"/>
    </reaction>
</comment>
<comment type="subunit">
    <text>Polymerization of globular actin (G-actin) leads to a structural filament (F-actin) in the form of a two-stranded helix. Each actin can bind to 4 others.</text>
</comment>
<comment type="subcellular location">
    <subcellularLocation>
        <location>Cytoplasm</location>
        <location>Cytoskeleton</location>
    </subcellularLocation>
</comment>
<comment type="PTM">
    <molecule>Actin, alpha skeletal muscle, intermediate form</molecule>
    <text evidence="3">N-terminal cleavage of acetylated cysteine of intermediate muscle actin by ACTMAP.</text>
</comment>
<comment type="PTM">
    <text evidence="3">Oxidation of Met-46 and Met-49 by MICALs (MICAL1, MICAL2 or MICAL3) to form methionine sulfoxide promotes actin filament depolymerization. MICAL1 and MICAL2 produce the (R)-S-oxide form. The (R)-S-oxide form is reverted by MSRB1 and MSRB2, which promotes actin repolymerization.</text>
</comment>
<comment type="PTM">
    <text evidence="2">Monomethylation at Lys-86 (K84me1) regulates actin-myosin interaction and actomyosin-dependent processes. Demethylation by ALKBH4 is required for maintaining actomyosin dynamics supporting normal cleavage furrow ingression during cytokinesis and cell migration.</text>
</comment>
<comment type="PTM">
    <text evidence="2">Methylated at His-75 by SETD3.</text>
</comment>
<comment type="miscellaneous">
    <text>In vertebrates 3 main groups of actin isoforms, alpha, beta and gamma have been identified. The alpha actins are found in muscle tissues and are a major constituent of the contractile apparatus. The beta and gamma actins coexist in most cell types as components of the cytoskeleton and as mediators of internal cell motility.</text>
</comment>
<comment type="similarity">
    <text evidence="6">Belongs to the actin family.</text>
</comment>
<dbReference type="EC" id="3.6.4.-" evidence="5"/>
<dbReference type="EMBL" id="D87740">
    <property type="protein sequence ID" value="BAA13446.1"/>
    <property type="molecule type" value="mRNA"/>
</dbReference>
<dbReference type="RefSeq" id="NP_001098276.1">
    <property type="nucleotide sequence ID" value="NM_001104806.1"/>
</dbReference>
<dbReference type="RefSeq" id="XP_020566641.1">
    <property type="nucleotide sequence ID" value="XM_020710982.1"/>
</dbReference>
<dbReference type="SMR" id="Q98972"/>
<dbReference type="FunCoup" id="Q98972">
    <property type="interactions" value="507"/>
</dbReference>
<dbReference type="STRING" id="8090.ENSORLP00000013649"/>
<dbReference type="Ensembl" id="ENSORLT00000013650.2">
    <property type="protein sequence ID" value="ENSORLP00000013649.2"/>
    <property type="gene ID" value="ENSORLG00000010881.2"/>
</dbReference>
<dbReference type="Ensembl" id="ENSORLT00015013382.1">
    <property type="protein sequence ID" value="ENSORLP00015022329.1"/>
    <property type="gene ID" value="ENSORLG00015001620.1"/>
</dbReference>
<dbReference type="Ensembl" id="ENSORLT00020010920.1">
    <property type="protein sequence ID" value="ENSORLP00020002664.1"/>
    <property type="gene ID" value="ENSORLG00020003451.1"/>
</dbReference>
<dbReference type="GeneID" id="100049431"/>
<dbReference type="KEGG" id="ola:100049431"/>
<dbReference type="CTD" id="407658"/>
<dbReference type="eggNOG" id="KOG0676">
    <property type="taxonomic scope" value="Eukaryota"/>
</dbReference>
<dbReference type="GeneTree" id="ENSGT00940000164361"/>
<dbReference type="InParanoid" id="Q98972"/>
<dbReference type="OrthoDB" id="6953074at2759"/>
<dbReference type="Proteomes" id="UP000001038">
    <property type="component" value="Chromosome 3"/>
</dbReference>
<dbReference type="Proteomes" id="UP000265180">
    <property type="component" value="Chromosome 3"/>
</dbReference>
<dbReference type="Proteomes" id="UP000265200">
    <property type="component" value="Chromosome 3"/>
</dbReference>
<dbReference type="Bgee" id="ENSORLG00000010881">
    <property type="expression patterns" value="Expressed in muscle tissue and 13 other cell types or tissues"/>
</dbReference>
<dbReference type="GO" id="GO:0015629">
    <property type="term" value="C:actin cytoskeleton"/>
    <property type="evidence" value="ECO:0000318"/>
    <property type="project" value="GO_Central"/>
</dbReference>
<dbReference type="GO" id="GO:0005737">
    <property type="term" value="C:cytoplasm"/>
    <property type="evidence" value="ECO:0007669"/>
    <property type="project" value="UniProtKB-KW"/>
</dbReference>
<dbReference type="GO" id="GO:0005524">
    <property type="term" value="F:ATP binding"/>
    <property type="evidence" value="ECO:0007669"/>
    <property type="project" value="UniProtKB-KW"/>
</dbReference>
<dbReference type="GO" id="GO:0016787">
    <property type="term" value="F:hydrolase activity"/>
    <property type="evidence" value="ECO:0007669"/>
    <property type="project" value="UniProtKB-KW"/>
</dbReference>
<dbReference type="CDD" id="cd10224">
    <property type="entry name" value="ASKHA_NBD_actin"/>
    <property type="match status" value="1"/>
</dbReference>
<dbReference type="FunFam" id="3.30.420.40:FF:000131">
    <property type="entry name" value="Actin, alpha skeletal muscle"/>
    <property type="match status" value="1"/>
</dbReference>
<dbReference type="FunFam" id="3.30.420.40:FF:000291">
    <property type="entry name" value="Actin, alpha skeletal muscle"/>
    <property type="match status" value="1"/>
</dbReference>
<dbReference type="FunFam" id="3.90.640.10:FF:000047">
    <property type="entry name" value="Actin, alpha skeletal muscle"/>
    <property type="match status" value="1"/>
</dbReference>
<dbReference type="FunFam" id="3.30.420.40:FF:000058">
    <property type="entry name" value="Putative actin-related protein 5"/>
    <property type="match status" value="1"/>
</dbReference>
<dbReference type="Gene3D" id="3.30.420.40">
    <property type="match status" value="2"/>
</dbReference>
<dbReference type="Gene3D" id="3.90.640.10">
    <property type="entry name" value="Actin, Chain A, domain 4"/>
    <property type="match status" value="1"/>
</dbReference>
<dbReference type="InterPro" id="IPR004000">
    <property type="entry name" value="Actin"/>
</dbReference>
<dbReference type="InterPro" id="IPR020902">
    <property type="entry name" value="Actin/actin-like_CS"/>
</dbReference>
<dbReference type="InterPro" id="IPR004001">
    <property type="entry name" value="Actin_CS"/>
</dbReference>
<dbReference type="InterPro" id="IPR043129">
    <property type="entry name" value="ATPase_NBD"/>
</dbReference>
<dbReference type="PANTHER" id="PTHR11937">
    <property type="entry name" value="ACTIN"/>
    <property type="match status" value="1"/>
</dbReference>
<dbReference type="Pfam" id="PF00022">
    <property type="entry name" value="Actin"/>
    <property type="match status" value="1"/>
</dbReference>
<dbReference type="PRINTS" id="PR00190">
    <property type="entry name" value="ACTIN"/>
</dbReference>
<dbReference type="SMART" id="SM00268">
    <property type="entry name" value="ACTIN"/>
    <property type="match status" value="1"/>
</dbReference>
<dbReference type="SUPFAM" id="SSF53067">
    <property type="entry name" value="Actin-like ATPase domain"/>
    <property type="match status" value="2"/>
</dbReference>
<dbReference type="PROSITE" id="PS00406">
    <property type="entry name" value="ACTINS_1"/>
    <property type="match status" value="1"/>
</dbReference>
<dbReference type="PROSITE" id="PS00432">
    <property type="entry name" value="ACTINS_2"/>
    <property type="match status" value="1"/>
</dbReference>
<dbReference type="PROSITE" id="PS01132">
    <property type="entry name" value="ACTINS_ACT_LIKE"/>
    <property type="match status" value="1"/>
</dbReference>
<gene>
    <name type="primary">acta1</name>
</gene>